<name>SSB_LEPIN</name>
<protein>
    <recommendedName>
        <fullName evidence="1">Single-stranded DNA-binding protein</fullName>
        <shortName evidence="1">SSB</shortName>
    </recommendedName>
</protein>
<feature type="chain" id="PRO_0000096056" description="Single-stranded DNA-binding protein">
    <location>
        <begin position="1"/>
        <end position="117"/>
    </location>
</feature>
<feature type="domain" description="SSB" evidence="1">
    <location>
        <begin position="1"/>
        <end position="107"/>
    </location>
</feature>
<comment type="subunit">
    <text evidence="1">Homotetramer.</text>
</comment>
<dbReference type="EMBL" id="AE010300">
    <property type="protein sequence ID" value="AAN50843.1"/>
    <property type="molecule type" value="Genomic_DNA"/>
</dbReference>
<dbReference type="RefSeq" id="NP_713825.1">
    <property type="nucleotide sequence ID" value="NC_004342.2"/>
</dbReference>
<dbReference type="RefSeq" id="WP_000788957.1">
    <property type="nucleotide sequence ID" value="NC_004342.2"/>
</dbReference>
<dbReference type="SMR" id="Q8F052"/>
<dbReference type="STRING" id="189518.LA_3645"/>
<dbReference type="PaxDb" id="189518-LA_3645"/>
<dbReference type="EnsemblBacteria" id="AAN50843">
    <property type="protein sequence ID" value="AAN50843"/>
    <property type="gene ID" value="LA_3645"/>
</dbReference>
<dbReference type="KEGG" id="lil:LA_3645"/>
<dbReference type="PATRIC" id="fig|189518.3.peg.3621"/>
<dbReference type="HOGENOM" id="CLU_078758_6_0_12"/>
<dbReference type="InParanoid" id="Q8F052"/>
<dbReference type="OrthoDB" id="9809878at2"/>
<dbReference type="Proteomes" id="UP000001408">
    <property type="component" value="Chromosome I"/>
</dbReference>
<dbReference type="GO" id="GO:0009295">
    <property type="term" value="C:nucleoid"/>
    <property type="evidence" value="ECO:0000318"/>
    <property type="project" value="GO_Central"/>
</dbReference>
<dbReference type="GO" id="GO:0008047">
    <property type="term" value="F:enzyme activator activity"/>
    <property type="evidence" value="ECO:0000318"/>
    <property type="project" value="GO_Central"/>
</dbReference>
<dbReference type="GO" id="GO:0003697">
    <property type="term" value="F:single-stranded DNA binding"/>
    <property type="evidence" value="ECO:0000318"/>
    <property type="project" value="GO_Central"/>
</dbReference>
<dbReference type="GO" id="GO:0006260">
    <property type="term" value="P:DNA replication"/>
    <property type="evidence" value="ECO:0000318"/>
    <property type="project" value="GO_Central"/>
</dbReference>
<dbReference type="CDD" id="cd04496">
    <property type="entry name" value="SSB_OBF"/>
    <property type="match status" value="1"/>
</dbReference>
<dbReference type="FunFam" id="2.40.50.140:FF:000284">
    <property type="entry name" value="Single-stranded DNA-binding protein"/>
    <property type="match status" value="1"/>
</dbReference>
<dbReference type="Gene3D" id="2.40.50.140">
    <property type="entry name" value="Nucleic acid-binding proteins"/>
    <property type="match status" value="1"/>
</dbReference>
<dbReference type="HAMAP" id="MF_00984">
    <property type="entry name" value="SSB"/>
    <property type="match status" value="1"/>
</dbReference>
<dbReference type="InterPro" id="IPR012340">
    <property type="entry name" value="NA-bd_OB-fold"/>
</dbReference>
<dbReference type="InterPro" id="IPR000424">
    <property type="entry name" value="Primosome_PriB/ssb"/>
</dbReference>
<dbReference type="InterPro" id="IPR011344">
    <property type="entry name" value="ssDNA-bd"/>
</dbReference>
<dbReference type="NCBIfam" id="TIGR00621">
    <property type="entry name" value="ssb"/>
    <property type="match status" value="1"/>
</dbReference>
<dbReference type="PANTHER" id="PTHR10302">
    <property type="entry name" value="SINGLE-STRANDED DNA-BINDING PROTEIN"/>
    <property type="match status" value="1"/>
</dbReference>
<dbReference type="PANTHER" id="PTHR10302:SF27">
    <property type="entry name" value="SINGLE-STRANDED DNA-BINDING PROTEIN"/>
    <property type="match status" value="1"/>
</dbReference>
<dbReference type="Pfam" id="PF00436">
    <property type="entry name" value="SSB"/>
    <property type="match status" value="1"/>
</dbReference>
<dbReference type="PIRSF" id="PIRSF002070">
    <property type="entry name" value="SSB"/>
    <property type="match status" value="1"/>
</dbReference>
<dbReference type="SUPFAM" id="SSF50249">
    <property type="entry name" value="Nucleic acid-binding proteins"/>
    <property type="match status" value="1"/>
</dbReference>
<dbReference type="PROSITE" id="PS50935">
    <property type="entry name" value="SSB"/>
    <property type="match status" value="1"/>
</dbReference>
<organism>
    <name type="scientific">Leptospira interrogans serogroup Icterohaemorrhagiae serovar Lai (strain 56601)</name>
    <dbReference type="NCBI Taxonomy" id="189518"/>
    <lineage>
        <taxon>Bacteria</taxon>
        <taxon>Pseudomonadati</taxon>
        <taxon>Spirochaetota</taxon>
        <taxon>Spirochaetia</taxon>
        <taxon>Leptospirales</taxon>
        <taxon>Leptospiraceae</taxon>
        <taxon>Leptospira</taxon>
    </lineage>
</organism>
<reference key="1">
    <citation type="journal article" date="2003" name="Nature">
        <title>Unique physiological and pathogenic features of Leptospira interrogans revealed by whole-genome sequencing.</title>
        <authorList>
            <person name="Ren S.-X."/>
            <person name="Fu G."/>
            <person name="Jiang X.-G."/>
            <person name="Zeng R."/>
            <person name="Miao Y.-G."/>
            <person name="Xu H."/>
            <person name="Zhang Y.-X."/>
            <person name="Xiong H."/>
            <person name="Lu G."/>
            <person name="Lu L.-F."/>
            <person name="Jiang H.-Q."/>
            <person name="Jia J."/>
            <person name="Tu Y.-F."/>
            <person name="Jiang J.-X."/>
            <person name="Gu W.-Y."/>
            <person name="Zhang Y.-Q."/>
            <person name="Cai Z."/>
            <person name="Sheng H.-H."/>
            <person name="Yin H.-F."/>
            <person name="Zhang Y."/>
            <person name="Zhu G.-F."/>
            <person name="Wan M."/>
            <person name="Huang H.-L."/>
            <person name="Qian Z."/>
            <person name="Wang S.-Y."/>
            <person name="Ma W."/>
            <person name="Yao Z.-J."/>
            <person name="Shen Y."/>
            <person name="Qiang B.-Q."/>
            <person name="Xia Q.-C."/>
            <person name="Guo X.-K."/>
            <person name="Danchin A."/>
            <person name="Saint Girons I."/>
            <person name="Somerville R.L."/>
            <person name="Wen Y.-M."/>
            <person name="Shi M.-H."/>
            <person name="Chen Z."/>
            <person name="Xu J.-G."/>
            <person name="Zhao G.-P."/>
        </authorList>
    </citation>
    <scope>NUCLEOTIDE SEQUENCE [LARGE SCALE GENOMIC DNA]</scope>
    <source>
        <strain>56601</strain>
    </source>
</reference>
<sequence>MKNIAHIILDGNLTSDPEIKTLNSGKSVATFTLAVNHDYKSTLEEPGEVSFVEIELWDRQAVNAHEYLKKGKKATVIGELRQDRWKAQDGSNRSKLKVVGQMIRFDGLPGKKEREVA</sequence>
<gene>
    <name type="primary">ssb</name>
    <name type="ordered locus">LA_3645</name>
</gene>
<keyword id="KW-0238">DNA-binding</keyword>
<keyword id="KW-1185">Reference proteome</keyword>
<evidence type="ECO:0000255" key="1">
    <source>
        <dbReference type="HAMAP-Rule" id="MF_00984"/>
    </source>
</evidence>
<accession>Q8F052</accession>
<proteinExistence type="inferred from homology"/>